<evidence type="ECO:0000305" key="1"/>
<reference key="1">
    <citation type="journal article" date="1991" name="Plant Physiol.">
        <title>Two Kunitz-type proteinase inhibitors from potato tubers.</title>
        <authorList>
            <person name="Walsh T.A."/>
            <person name="Twitchell W.P."/>
        </authorList>
    </citation>
    <scope>PROTEIN SEQUENCE</scope>
    <source>
        <strain>cv. Russet Burbank-0</strain>
        <tissue>Tuber</tissue>
    </source>
</reference>
<dbReference type="STRING" id="4113.P24743"/>
<dbReference type="InParanoid" id="P24743"/>
<dbReference type="Proteomes" id="UP000011115">
    <property type="component" value="Unassembled WGS sequence"/>
</dbReference>
<dbReference type="GO" id="GO:0004867">
    <property type="term" value="F:serine-type endopeptidase inhibitor activity"/>
    <property type="evidence" value="ECO:0007669"/>
    <property type="project" value="UniProtKB-KW"/>
</dbReference>
<dbReference type="Gene3D" id="2.80.10.50">
    <property type="match status" value="1"/>
</dbReference>
<dbReference type="InterPro" id="IPR011065">
    <property type="entry name" value="Kunitz_inhibitor_STI-like_sf"/>
</dbReference>
<dbReference type="InterPro" id="IPR002160">
    <property type="entry name" value="Prot_inh_Kunz-lg"/>
</dbReference>
<dbReference type="SUPFAM" id="SSF50386">
    <property type="entry name" value="STI-like"/>
    <property type="match status" value="1"/>
</dbReference>
<dbReference type="PROSITE" id="PS00283">
    <property type="entry name" value="SOYBEAN_KUNITZ"/>
    <property type="match status" value="1"/>
</dbReference>
<accession>P24743</accession>
<name>SPI8_SOLTU</name>
<proteinExistence type="evidence at protein level"/>
<sequence>LPSDATPVLDVTGKELDPRLSYRIISIGRXALGGXVYLGKSP</sequence>
<protein>
    <recommendedName>
        <fullName>Serine protease inhibitor 8</fullName>
    </recommendedName>
    <alternativeName>
        <fullName>PKI-1</fullName>
    </alternativeName>
</protein>
<comment type="function">
    <text>Potent inhibitor of animal pancreatic trypsin (serine protease).</text>
</comment>
<comment type="tissue specificity">
    <text>Cortex of potato tuber.</text>
</comment>
<comment type="similarity">
    <text evidence="1">Belongs to the protease inhibitor I3 (leguminous Kunitz-type inhibitor) family.</text>
</comment>
<keyword id="KW-0903">Direct protein sequencing</keyword>
<keyword id="KW-0646">Protease inhibitor</keyword>
<keyword id="KW-1185">Reference proteome</keyword>
<keyword id="KW-0722">Serine protease inhibitor</keyword>
<organism>
    <name type="scientific">Solanum tuberosum</name>
    <name type="common">Potato</name>
    <dbReference type="NCBI Taxonomy" id="4113"/>
    <lineage>
        <taxon>Eukaryota</taxon>
        <taxon>Viridiplantae</taxon>
        <taxon>Streptophyta</taxon>
        <taxon>Embryophyta</taxon>
        <taxon>Tracheophyta</taxon>
        <taxon>Spermatophyta</taxon>
        <taxon>Magnoliopsida</taxon>
        <taxon>eudicotyledons</taxon>
        <taxon>Gunneridae</taxon>
        <taxon>Pentapetalae</taxon>
        <taxon>asterids</taxon>
        <taxon>lamiids</taxon>
        <taxon>Solanales</taxon>
        <taxon>Solanaceae</taxon>
        <taxon>Solanoideae</taxon>
        <taxon>Solaneae</taxon>
        <taxon>Solanum</taxon>
    </lineage>
</organism>
<feature type="chain" id="PRO_0000083309" description="Serine protease inhibitor 8">
    <location>
        <begin position="1"/>
        <end position="42" status="greater than"/>
    </location>
</feature>
<feature type="non-terminal residue">
    <location>
        <position position="42"/>
    </location>
</feature>